<protein>
    <recommendedName>
        <fullName>Putative uncharacterized protein OPI6</fullName>
    </recommendedName>
</protein>
<proteinExistence type="uncertain"/>
<dbReference type="EMBL" id="AY693333">
    <property type="protein sequence ID" value="AAT93352.1"/>
    <property type="molecule type" value="Genomic_DNA"/>
</dbReference>
<dbReference type="EMBL" id="Z74144">
    <property type="protein sequence ID" value="CAA98662.1"/>
    <property type="molecule type" value="Genomic_DNA"/>
</dbReference>
<dbReference type="PIR" id="S67638">
    <property type="entry name" value="S67638"/>
</dbReference>
<dbReference type="DIP" id="DIP-5232N"/>
<dbReference type="IntAct" id="Q07521">
    <property type="interactions" value="1"/>
</dbReference>
<dbReference type="STRING" id="4932.YDL096C"/>
<dbReference type="PaxDb" id="4932-YDL096C"/>
<dbReference type="EnsemblFungi" id="YDL096C_mRNA">
    <property type="protein sequence ID" value="YDL096C"/>
    <property type="gene ID" value="YDL096C"/>
</dbReference>
<dbReference type="AGR" id="SGD:S000002254"/>
<dbReference type="SGD" id="S000002254">
    <property type="gene designation" value="OPI6"/>
</dbReference>
<dbReference type="HOGENOM" id="CLU_2199043_0_0_1"/>
<evidence type="ECO:0000269" key="1">
    <source>
    </source>
</evidence>
<evidence type="ECO:0000305" key="2"/>
<evidence type="ECO:0000305" key="3">
    <source>
    </source>
</evidence>
<name>OPI6_YEAST</name>
<sequence>MYCEANPPKCTSSNTTLSGHAKPCNLMTAVKTARQATNSFSLRVTMVRNEANSALGSVTIKGLTGPCLISSSGTGSSCSTRLYVFSSDMTVLVAVSCFLIGSSDTTSL</sequence>
<reference key="1">
    <citation type="journal article" date="1997" name="Nature">
        <title>The nucleotide sequence of Saccharomyces cerevisiae chromosome IV.</title>
        <authorList>
            <person name="Jacq C."/>
            <person name="Alt-Moerbe J."/>
            <person name="Andre B."/>
            <person name="Arnold W."/>
            <person name="Bahr A."/>
            <person name="Ballesta J.P.G."/>
            <person name="Bargues M."/>
            <person name="Baron L."/>
            <person name="Becker A."/>
            <person name="Biteau N."/>
            <person name="Bloecker H."/>
            <person name="Blugeon C."/>
            <person name="Boskovic J."/>
            <person name="Brandt P."/>
            <person name="Brueckner M."/>
            <person name="Buitrago M.J."/>
            <person name="Coster F."/>
            <person name="Delaveau T."/>
            <person name="del Rey F."/>
            <person name="Dujon B."/>
            <person name="Eide L.G."/>
            <person name="Garcia-Cantalejo J.M."/>
            <person name="Goffeau A."/>
            <person name="Gomez-Peris A."/>
            <person name="Granotier C."/>
            <person name="Hanemann V."/>
            <person name="Hankeln T."/>
            <person name="Hoheisel J.D."/>
            <person name="Jaeger W."/>
            <person name="Jimenez A."/>
            <person name="Jonniaux J.-L."/>
            <person name="Kraemer C."/>
            <person name="Kuester H."/>
            <person name="Laamanen P."/>
            <person name="Legros Y."/>
            <person name="Louis E.J."/>
            <person name="Moeller-Rieker S."/>
            <person name="Monnet A."/>
            <person name="Moro M."/>
            <person name="Mueller-Auer S."/>
            <person name="Nussbaumer B."/>
            <person name="Paricio N."/>
            <person name="Paulin L."/>
            <person name="Perea J."/>
            <person name="Perez-Alonso M."/>
            <person name="Perez-Ortin J.E."/>
            <person name="Pohl T.M."/>
            <person name="Prydz H."/>
            <person name="Purnelle B."/>
            <person name="Rasmussen S.W."/>
            <person name="Remacha M.A."/>
            <person name="Revuelta J.L."/>
            <person name="Rieger M."/>
            <person name="Salom D."/>
            <person name="Saluz H.P."/>
            <person name="Saiz J.E."/>
            <person name="Saren A.-M."/>
            <person name="Schaefer M."/>
            <person name="Scharfe M."/>
            <person name="Schmidt E.R."/>
            <person name="Schneider C."/>
            <person name="Scholler P."/>
            <person name="Schwarz S."/>
            <person name="Soler-Mira A."/>
            <person name="Urrestarazu L.A."/>
            <person name="Verhasselt P."/>
            <person name="Vissers S."/>
            <person name="Voet M."/>
            <person name="Volckaert G."/>
            <person name="Wagner G."/>
            <person name="Wambutt R."/>
            <person name="Wedler E."/>
            <person name="Wedler H."/>
            <person name="Woelfl S."/>
            <person name="Harris D.E."/>
            <person name="Bowman S."/>
            <person name="Brown D."/>
            <person name="Churcher C.M."/>
            <person name="Connor R."/>
            <person name="Dedman K."/>
            <person name="Gentles S."/>
            <person name="Hamlin N."/>
            <person name="Hunt S."/>
            <person name="Jones L."/>
            <person name="McDonald S."/>
            <person name="Murphy L.D."/>
            <person name="Niblett D."/>
            <person name="Odell C."/>
            <person name="Oliver K."/>
            <person name="Rajandream M.A."/>
            <person name="Richards C."/>
            <person name="Shore L."/>
            <person name="Walsh S.V."/>
            <person name="Barrell B.G."/>
            <person name="Dietrich F.S."/>
            <person name="Mulligan J.T."/>
            <person name="Allen E."/>
            <person name="Araujo R."/>
            <person name="Aviles E."/>
            <person name="Berno A."/>
            <person name="Carpenter J."/>
            <person name="Chen E."/>
            <person name="Cherry J.M."/>
            <person name="Chung E."/>
            <person name="Duncan M."/>
            <person name="Hunicke-Smith S."/>
            <person name="Hyman R.W."/>
            <person name="Komp C."/>
            <person name="Lashkari D."/>
            <person name="Lew H."/>
            <person name="Lin D."/>
            <person name="Mosedale D."/>
            <person name="Nakahara K."/>
            <person name="Namath A."/>
            <person name="Oefner P."/>
            <person name="Oh C."/>
            <person name="Petel F.X."/>
            <person name="Roberts D."/>
            <person name="Schramm S."/>
            <person name="Schroeder M."/>
            <person name="Shogren T."/>
            <person name="Shroff N."/>
            <person name="Winant A."/>
            <person name="Yelton M.A."/>
            <person name="Botstein D."/>
            <person name="Davis R.W."/>
            <person name="Johnston M."/>
            <person name="Andrews S."/>
            <person name="Brinkman R."/>
            <person name="Cooper J."/>
            <person name="Ding H."/>
            <person name="Du Z."/>
            <person name="Favello A."/>
            <person name="Fulton L."/>
            <person name="Gattung S."/>
            <person name="Greco T."/>
            <person name="Hallsworth K."/>
            <person name="Hawkins J."/>
            <person name="Hillier L.W."/>
            <person name="Jier M."/>
            <person name="Johnson D."/>
            <person name="Johnston L."/>
            <person name="Kirsten J."/>
            <person name="Kucaba T."/>
            <person name="Langston Y."/>
            <person name="Latreille P."/>
            <person name="Le T."/>
            <person name="Mardis E."/>
            <person name="Menezes S."/>
            <person name="Miller N."/>
            <person name="Nhan M."/>
            <person name="Pauley A."/>
            <person name="Peluso D."/>
            <person name="Rifkin L."/>
            <person name="Riles L."/>
            <person name="Taich A."/>
            <person name="Trevaskis E."/>
            <person name="Vignati D."/>
            <person name="Wilcox L."/>
            <person name="Wohldman P."/>
            <person name="Vaudin M."/>
            <person name="Wilson R."/>
            <person name="Waterston R."/>
            <person name="Albermann K."/>
            <person name="Hani J."/>
            <person name="Heumann K."/>
            <person name="Kleine K."/>
            <person name="Mewes H.-W."/>
            <person name="Zollner A."/>
            <person name="Zaccaria P."/>
        </authorList>
    </citation>
    <scope>NUCLEOTIDE SEQUENCE [LARGE SCALE GENOMIC DNA]</scope>
    <source>
        <strain>ATCC 204508 / S288c</strain>
    </source>
</reference>
<reference key="2">
    <citation type="journal article" date="2014" name="G3 (Bethesda)">
        <title>The reference genome sequence of Saccharomyces cerevisiae: Then and now.</title>
        <authorList>
            <person name="Engel S.R."/>
            <person name="Dietrich F.S."/>
            <person name="Fisk D.G."/>
            <person name="Binkley G."/>
            <person name="Balakrishnan R."/>
            <person name="Costanzo M.C."/>
            <person name="Dwight S.S."/>
            <person name="Hitz B.C."/>
            <person name="Karra K."/>
            <person name="Nash R.S."/>
            <person name="Weng S."/>
            <person name="Wong E.D."/>
            <person name="Lloyd P."/>
            <person name="Skrzypek M.S."/>
            <person name="Miyasato S.R."/>
            <person name="Simison M."/>
            <person name="Cherry J.M."/>
        </authorList>
    </citation>
    <scope>GENOME REANNOTATION</scope>
    <source>
        <strain>ATCC 204508 / S288c</strain>
    </source>
</reference>
<reference key="3">
    <citation type="journal article" date="2007" name="Genome Res.">
        <title>Approaching a complete repository of sequence-verified protein-encoding clones for Saccharomyces cerevisiae.</title>
        <authorList>
            <person name="Hu Y."/>
            <person name="Rolfs A."/>
            <person name="Bhullar B."/>
            <person name="Murthy T.V.S."/>
            <person name="Zhu C."/>
            <person name="Berger M.F."/>
            <person name="Camargo A.A."/>
            <person name="Kelley F."/>
            <person name="McCarron S."/>
            <person name="Jepson D."/>
            <person name="Richardson A."/>
            <person name="Raphael J."/>
            <person name="Moreira D."/>
            <person name="Taycher E."/>
            <person name="Zuo D."/>
            <person name="Mohr S."/>
            <person name="Kane M.F."/>
            <person name="Williamson J."/>
            <person name="Simpson A.J.G."/>
            <person name="Bulyk M.L."/>
            <person name="Harlow E."/>
            <person name="Marsischky G."/>
            <person name="Kolodner R.D."/>
            <person name="LaBaer J."/>
        </authorList>
    </citation>
    <scope>NUCLEOTIDE SEQUENCE [GENOMIC DNA]</scope>
    <source>
        <strain>ATCC 204508 / S288c</strain>
    </source>
</reference>
<reference key="4">
    <citation type="journal article" date="2006" name="Genetics">
        <title>Genomic analysis of the Opi- phenotype.</title>
        <authorList>
            <person name="Hancock L.C."/>
            <person name="Behta R.P."/>
            <person name="Lopes J.M."/>
        </authorList>
    </citation>
    <scope>DISRUPTION PHENOTYPE</scope>
</reference>
<organism>
    <name type="scientific">Saccharomyces cerevisiae (strain ATCC 204508 / S288c)</name>
    <name type="common">Baker's yeast</name>
    <dbReference type="NCBI Taxonomy" id="559292"/>
    <lineage>
        <taxon>Eukaryota</taxon>
        <taxon>Fungi</taxon>
        <taxon>Dikarya</taxon>
        <taxon>Ascomycota</taxon>
        <taxon>Saccharomycotina</taxon>
        <taxon>Saccharomycetes</taxon>
        <taxon>Saccharomycetales</taxon>
        <taxon>Saccharomycetaceae</taxon>
        <taxon>Saccharomyces</taxon>
    </lineage>
</organism>
<comment type="disruption phenotype">
    <text evidence="1">Deletion leads to overproduction and excretion of inositol into the growth medium.</text>
</comment>
<comment type="miscellaneous">
    <text evidence="2">Partially overlaps PMT1. Disruption phenotypes caused by deletion of this gene may also be a result of a defect in its overlapping gene.</text>
</comment>
<comment type="caution">
    <text evidence="3">Product of a dubious gene prediction unlikely to encode a functional protein. Because of that it is not part of the S.cerevisiae S288c complete/reference proteome set.</text>
</comment>
<feature type="chain" id="PRO_0000299776" description="Putative uncharacterized protein OPI6">
    <location>
        <begin position="1"/>
        <end position="108"/>
    </location>
</feature>
<gene>
    <name type="primary">OPI6</name>
    <name type="ordered locus">YDL096C</name>
</gene>
<accession>Q07521</accession>